<dbReference type="GO" id="GO:0005576">
    <property type="term" value="C:extracellular region"/>
    <property type="evidence" value="ECO:0000314"/>
    <property type="project" value="UniProtKB"/>
</dbReference>
<dbReference type="GO" id="GO:0042742">
    <property type="term" value="P:defense response to bacterium"/>
    <property type="evidence" value="ECO:0007669"/>
    <property type="project" value="UniProtKB-KW"/>
</dbReference>
<dbReference type="GO" id="GO:0045087">
    <property type="term" value="P:innate immune response"/>
    <property type="evidence" value="ECO:0007669"/>
    <property type="project" value="UniProtKB-KW"/>
</dbReference>
<feature type="peptide" id="PRO_0000456400" description="Temporin-1Tt" evidence="2">
    <location>
        <begin position="1"/>
        <end position="13"/>
    </location>
</feature>
<feature type="modified residue" description="Leucine amide" evidence="2">
    <location>
        <position position="13"/>
    </location>
</feature>
<feature type="unsure residue" description="L or I" evidence="2">
    <location>
        <position position="2"/>
    </location>
</feature>
<feature type="unsure residue" description="L or I" evidence="2">
    <location>
        <position position="9"/>
    </location>
</feature>
<feature type="unsure residue" description="L or I" evidence="2">
    <location>
        <position position="13"/>
    </location>
</feature>
<name>TPT_RANTE</name>
<reference evidence="4" key="1">
    <citation type="journal article" date="2021" name="Anal. Bioanal. Chem.">
        <title>Differentiation of Central Slovenian and Moscow populations of Rana temporaria frogs using peptide biomarkers of temporins family.</title>
        <authorList>
            <person name="Samgina T.Y."/>
            <person name="Vasileva I.D."/>
            <person name="Kovalev S.V."/>
            <person name="Trebse P."/>
            <person name="Torkar G."/>
            <person name="Surin A.K."/>
            <person name="Zubarev R.A."/>
            <person name="Lebedev A.T."/>
        </authorList>
    </citation>
    <scope>IDENTIFICATION BY MASS SPECTROMETRY</scope>
    <scope>SUBCELLULAR LOCATION</scope>
    <scope>AMIDATION AT LEU-13</scope>
    <source>
        <tissue evidence="3">Skin secretion</tissue>
    </source>
</reference>
<protein>
    <recommendedName>
        <fullName evidence="5">Temporin-1Tt</fullName>
    </recommendedName>
    <alternativeName>
        <fullName evidence="3">Temporin-T</fullName>
    </alternativeName>
</protein>
<comment type="function">
    <text evidence="1">Antimicrobial peptide.</text>
</comment>
<comment type="subcellular location">
    <subcellularLocation>
        <location evidence="2">Secreted</location>
    </subcellularLocation>
</comment>
<comment type="tissue specificity">
    <text evidence="5">Expressed by the skin glands.</text>
</comment>
<comment type="mass spectrometry"/>
<comment type="similarity">
    <text evidence="3">Belongs to the frog skin active peptide (FSAP) family. Temporin subfamily.</text>
</comment>
<evidence type="ECO:0000250" key="1">
    <source>
        <dbReference type="UniProtKB" id="P79874"/>
    </source>
</evidence>
<evidence type="ECO:0000269" key="2">
    <source>
    </source>
</evidence>
<evidence type="ECO:0000303" key="3">
    <source>
    </source>
</evidence>
<evidence type="ECO:0000305" key="4"/>
<evidence type="ECO:0000305" key="5">
    <source>
    </source>
</evidence>
<proteinExistence type="evidence at protein level"/>
<sequence>FLGALVNALTRVL</sequence>
<keyword id="KW-0027">Amidation</keyword>
<keyword id="KW-0878">Amphibian defense peptide</keyword>
<keyword id="KW-0044">Antibiotic</keyword>
<keyword id="KW-0929">Antimicrobial</keyword>
<keyword id="KW-0391">Immunity</keyword>
<keyword id="KW-0399">Innate immunity</keyword>
<keyword id="KW-0964">Secreted</keyword>
<accession>C0HM34</accession>
<organism evidence="3">
    <name type="scientific">Rana temporaria</name>
    <name type="common">European common frog</name>
    <dbReference type="NCBI Taxonomy" id="8407"/>
    <lineage>
        <taxon>Eukaryota</taxon>
        <taxon>Metazoa</taxon>
        <taxon>Chordata</taxon>
        <taxon>Craniata</taxon>
        <taxon>Vertebrata</taxon>
        <taxon>Euteleostomi</taxon>
        <taxon>Amphibia</taxon>
        <taxon>Batrachia</taxon>
        <taxon>Anura</taxon>
        <taxon>Neobatrachia</taxon>
        <taxon>Ranoidea</taxon>
        <taxon>Ranidae</taxon>
        <taxon>Rana</taxon>
        <taxon>Rana</taxon>
    </lineage>
</organism>